<protein>
    <recommendedName>
        <fullName evidence="1">Argininosuccinate synthase</fullName>
        <ecNumber evidence="1">6.3.4.5</ecNumber>
    </recommendedName>
    <alternativeName>
        <fullName evidence="1">Citrulline--aspartate ligase</fullName>
    </alternativeName>
</protein>
<accession>Q7V9F8</accession>
<proteinExistence type="inferred from homology"/>
<organism>
    <name type="scientific">Prochlorococcus marinus (strain SARG / CCMP1375 / SS120)</name>
    <dbReference type="NCBI Taxonomy" id="167539"/>
    <lineage>
        <taxon>Bacteria</taxon>
        <taxon>Bacillati</taxon>
        <taxon>Cyanobacteriota</taxon>
        <taxon>Cyanophyceae</taxon>
        <taxon>Synechococcales</taxon>
        <taxon>Prochlorococcaceae</taxon>
        <taxon>Prochlorococcus</taxon>
    </lineage>
</organism>
<feature type="chain" id="PRO_0000148623" description="Argininosuccinate synthase">
    <location>
        <begin position="1"/>
        <end position="402"/>
    </location>
</feature>
<feature type="binding site" evidence="1">
    <location>
        <begin position="10"/>
        <end position="18"/>
    </location>
    <ligand>
        <name>ATP</name>
        <dbReference type="ChEBI" id="CHEBI:30616"/>
    </ligand>
</feature>
<feature type="binding site" evidence="1">
    <location>
        <position position="38"/>
    </location>
    <ligand>
        <name>ATP</name>
        <dbReference type="ChEBI" id="CHEBI:30616"/>
    </ligand>
</feature>
<feature type="binding site" evidence="1">
    <location>
        <position position="89"/>
    </location>
    <ligand>
        <name>L-citrulline</name>
        <dbReference type="ChEBI" id="CHEBI:57743"/>
    </ligand>
</feature>
<feature type="binding site" evidence="1">
    <location>
        <position position="119"/>
    </location>
    <ligand>
        <name>ATP</name>
        <dbReference type="ChEBI" id="CHEBI:30616"/>
    </ligand>
</feature>
<feature type="binding site" evidence="1">
    <location>
        <position position="121"/>
    </location>
    <ligand>
        <name>L-aspartate</name>
        <dbReference type="ChEBI" id="CHEBI:29991"/>
    </ligand>
</feature>
<feature type="binding site" evidence="1">
    <location>
        <position position="125"/>
    </location>
    <ligand>
        <name>L-aspartate</name>
        <dbReference type="ChEBI" id="CHEBI:29991"/>
    </ligand>
</feature>
<feature type="binding site" evidence="1">
    <location>
        <position position="125"/>
    </location>
    <ligand>
        <name>L-citrulline</name>
        <dbReference type="ChEBI" id="CHEBI:57743"/>
    </ligand>
</feature>
<feature type="binding site" evidence="1">
    <location>
        <position position="126"/>
    </location>
    <ligand>
        <name>L-aspartate</name>
        <dbReference type="ChEBI" id="CHEBI:29991"/>
    </ligand>
</feature>
<feature type="binding site" evidence="1">
    <location>
        <position position="129"/>
    </location>
    <ligand>
        <name>L-citrulline</name>
        <dbReference type="ChEBI" id="CHEBI:57743"/>
    </ligand>
</feature>
<feature type="binding site" evidence="1">
    <location>
        <position position="177"/>
    </location>
    <ligand>
        <name>L-citrulline</name>
        <dbReference type="ChEBI" id="CHEBI:57743"/>
    </ligand>
</feature>
<feature type="binding site" evidence="1">
    <location>
        <position position="186"/>
    </location>
    <ligand>
        <name>L-citrulline</name>
        <dbReference type="ChEBI" id="CHEBI:57743"/>
    </ligand>
</feature>
<feature type="binding site" evidence="1">
    <location>
        <position position="262"/>
    </location>
    <ligand>
        <name>L-citrulline</name>
        <dbReference type="ChEBI" id="CHEBI:57743"/>
    </ligand>
</feature>
<feature type="binding site" evidence="1">
    <location>
        <position position="274"/>
    </location>
    <ligand>
        <name>L-citrulline</name>
        <dbReference type="ChEBI" id="CHEBI:57743"/>
    </ligand>
</feature>
<reference key="1">
    <citation type="journal article" date="2003" name="Proc. Natl. Acad. Sci. U.S.A.">
        <title>Genome sequence of the cyanobacterium Prochlorococcus marinus SS120, a nearly minimal oxyphototrophic genome.</title>
        <authorList>
            <person name="Dufresne A."/>
            <person name="Salanoubat M."/>
            <person name="Partensky F."/>
            <person name="Artiguenave F."/>
            <person name="Axmann I.M."/>
            <person name="Barbe V."/>
            <person name="Duprat S."/>
            <person name="Galperin M.Y."/>
            <person name="Koonin E.V."/>
            <person name="Le Gall F."/>
            <person name="Makarova K.S."/>
            <person name="Ostrowski M."/>
            <person name="Oztas S."/>
            <person name="Robert C."/>
            <person name="Rogozin I.B."/>
            <person name="Scanlan D.J."/>
            <person name="Tandeau de Marsac N."/>
            <person name="Weissenbach J."/>
            <person name="Wincker P."/>
            <person name="Wolf Y.I."/>
            <person name="Hess W.R."/>
        </authorList>
    </citation>
    <scope>NUCLEOTIDE SEQUENCE [LARGE SCALE GENOMIC DNA]</scope>
    <source>
        <strain>SARG / CCMP1375 / SS120</strain>
    </source>
</reference>
<keyword id="KW-0028">Amino-acid biosynthesis</keyword>
<keyword id="KW-0055">Arginine biosynthesis</keyword>
<keyword id="KW-0067">ATP-binding</keyword>
<keyword id="KW-0963">Cytoplasm</keyword>
<keyword id="KW-0436">Ligase</keyword>
<keyword id="KW-0547">Nucleotide-binding</keyword>
<keyword id="KW-1185">Reference proteome</keyword>
<comment type="catalytic activity">
    <reaction evidence="1">
        <text>L-citrulline + L-aspartate + ATP = 2-(N(omega)-L-arginino)succinate + AMP + diphosphate + H(+)</text>
        <dbReference type="Rhea" id="RHEA:10932"/>
        <dbReference type="ChEBI" id="CHEBI:15378"/>
        <dbReference type="ChEBI" id="CHEBI:29991"/>
        <dbReference type="ChEBI" id="CHEBI:30616"/>
        <dbReference type="ChEBI" id="CHEBI:33019"/>
        <dbReference type="ChEBI" id="CHEBI:57472"/>
        <dbReference type="ChEBI" id="CHEBI:57743"/>
        <dbReference type="ChEBI" id="CHEBI:456215"/>
        <dbReference type="EC" id="6.3.4.5"/>
    </reaction>
</comment>
<comment type="pathway">
    <text evidence="1">Amino-acid biosynthesis; L-arginine biosynthesis; L-arginine from L-ornithine and carbamoyl phosphate: step 2/3.</text>
</comment>
<comment type="subunit">
    <text evidence="1">Homotetramer.</text>
</comment>
<comment type="subcellular location">
    <subcellularLocation>
        <location evidence="1">Cytoplasm</location>
    </subcellularLocation>
</comment>
<comment type="similarity">
    <text evidence="1">Belongs to the argininosuccinate synthase family. Type 1 subfamily.</text>
</comment>
<sequence length="402" mass="44378">MGDFQKVVLAYSGGVDTSACIPYLKNEYGVEEIIAFAADLGQGEELEVVRKKALLAGAKESLVDDLIEPFIHDFAFPAIRANALYEGRYPLSTALARPLIASRLVELAREMEAGAVAHGCTGKGNDQVRFDLAISSLAPHLKILTPAREWSMSRQELISYGEKFGIPAPVSKKSPYSIDLNLLGRSIEAGPLEDPFLAPREEVFQITSSIQESPDTPEEIEIQFEAGNPIAINGVTLDPVSIIKKANALAGRHGFGRIDMIENRVVGIKSREIYEAPGLMLLIKCHQEIESITLSADVLRTKVGIERQWADLVYQGFWFSPLKNALDAFIDRTQLDVNGSVKIQLFKGNATIQGRQSYSNSLYLPDIATYSAEDQYDHKSAEGFIYVWGLANRLWASINRDK</sequence>
<evidence type="ECO:0000255" key="1">
    <source>
        <dbReference type="HAMAP-Rule" id="MF_00005"/>
    </source>
</evidence>
<name>ASSY_PROMA</name>
<gene>
    <name evidence="1" type="primary">argG</name>
    <name type="ordered locus">Pro_1875</name>
</gene>
<dbReference type="EC" id="6.3.4.5" evidence="1"/>
<dbReference type="EMBL" id="AE017126">
    <property type="protein sequence ID" value="AAQ00919.1"/>
    <property type="molecule type" value="Genomic_DNA"/>
</dbReference>
<dbReference type="RefSeq" id="NP_876266.1">
    <property type="nucleotide sequence ID" value="NC_005042.1"/>
</dbReference>
<dbReference type="RefSeq" id="WP_011126024.1">
    <property type="nucleotide sequence ID" value="NC_005042.1"/>
</dbReference>
<dbReference type="SMR" id="Q7V9F8"/>
<dbReference type="STRING" id="167539.Pro_1875"/>
<dbReference type="EnsemblBacteria" id="AAQ00919">
    <property type="protein sequence ID" value="AAQ00919"/>
    <property type="gene ID" value="Pro_1875"/>
</dbReference>
<dbReference type="KEGG" id="pma:Pro_1875"/>
<dbReference type="PATRIC" id="fig|167539.5.peg.1978"/>
<dbReference type="eggNOG" id="COG0137">
    <property type="taxonomic scope" value="Bacteria"/>
</dbReference>
<dbReference type="HOGENOM" id="CLU_032784_4_2_3"/>
<dbReference type="OrthoDB" id="9801641at2"/>
<dbReference type="UniPathway" id="UPA00068">
    <property type="reaction ID" value="UER00113"/>
</dbReference>
<dbReference type="Proteomes" id="UP000001420">
    <property type="component" value="Chromosome"/>
</dbReference>
<dbReference type="GO" id="GO:0005737">
    <property type="term" value="C:cytoplasm"/>
    <property type="evidence" value="ECO:0007669"/>
    <property type="project" value="UniProtKB-SubCell"/>
</dbReference>
<dbReference type="GO" id="GO:0004055">
    <property type="term" value="F:argininosuccinate synthase activity"/>
    <property type="evidence" value="ECO:0007669"/>
    <property type="project" value="UniProtKB-UniRule"/>
</dbReference>
<dbReference type="GO" id="GO:0005524">
    <property type="term" value="F:ATP binding"/>
    <property type="evidence" value="ECO:0007669"/>
    <property type="project" value="UniProtKB-UniRule"/>
</dbReference>
<dbReference type="GO" id="GO:0000053">
    <property type="term" value="P:argininosuccinate metabolic process"/>
    <property type="evidence" value="ECO:0007669"/>
    <property type="project" value="TreeGrafter"/>
</dbReference>
<dbReference type="GO" id="GO:0006526">
    <property type="term" value="P:L-arginine biosynthetic process"/>
    <property type="evidence" value="ECO:0007669"/>
    <property type="project" value="UniProtKB-UniRule"/>
</dbReference>
<dbReference type="GO" id="GO:0000050">
    <property type="term" value="P:urea cycle"/>
    <property type="evidence" value="ECO:0007669"/>
    <property type="project" value="TreeGrafter"/>
</dbReference>
<dbReference type="CDD" id="cd01999">
    <property type="entry name" value="ASS"/>
    <property type="match status" value="1"/>
</dbReference>
<dbReference type="FunFam" id="3.40.50.620:FF:000019">
    <property type="entry name" value="Argininosuccinate synthase"/>
    <property type="match status" value="1"/>
</dbReference>
<dbReference type="FunFam" id="3.90.1260.10:FF:000007">
    <property type="entry name" value="Argininosuccinate synthase"/>
    <property type="match status" value="1"/>
</dbReference>
<dbReference type="Gene3D" id="3.90.1260.10">
    <property type="entry name" value="Argininosuccinate synthetase, chain A, domain 2"/>
    <property type="match status" value="1"/>
</dbReference>
<dbReference type="Gene3D" id="3.40.50.620">
    <property type="entry name" value="HUPs"/>
    <property type="match status" value="1"/>
</dbReference>
<dbReference type="Gene3D" id="1.20.5.470">
    <property type="entry name" value="Single helix bin"/>
    <property type="match status" value="1"/>
</dbReference>
<dbReference type="HAMAP" id="MF_00005">
    <property type="entry name" value="Arg_succ_synth_type1"/>
    <property type="match status" value="1"/>
</dbReference>
<dbReference type="InterPro" id="IPR048268">
    <property type="entry name" value="Arginosuc_syn_C"/>
</dbReference>
<dbReference type="InterPro" id="IPR048267">
    <property type="entry name" value="Arginosuc_syn_N"/>
</dbReference>
<dbReference type="InterPro" id="IPR001518">
    <property type="entry name" value="Arginosuc_synth"/>
</dbReference>
<dbReference type="InterPro" id="IPR018223">
    <property type="entry name" value="Arginosuc_synth_CS"/>
</dbReference>
<dbReference type="InterPro" id="IPR023434">
    <property type="entry name" value="Arginosuc_synth_type_1_subfam"/>
</dbReference>
<dbReference type="InterPro" id="IPR024074">
    <property type="entry name" value="AS_cat/multimer_dom_body"/>
</dbReference>
<dbReference type="InterPro" id="IPR014729">
    <property type="entry name" value="Rossmann-like_a/b/a_fold"/>
</dbReference>
<dbReference type="NCBIfam" id="TIGR00032">
    <property type="entry name" value="argG"/>
    <property type="match status" value="1"/>
</dbReference>
<dbReference type="NCBIfam" id="NF001770">
    <property type="entry name" value="PRK00509.1"/>
    <property type="match status" value="1"/>
</dbReference>
<dbReference type="PANTHER" id="PTHR11587">
    <property type="entry name" value="ARGININOSUCCINATE SYNTHASE"/>
    <property type="match status" value="1"/>
</dbReference>
<dbReference type="PANTHER" id="PTHR11587:SF2">
    <property type="entry name" value="ARGININOSUCCINATE SYNTHASE"/>
    <property type="match status" value="1"/>
</dbReference>
<dbReference type="Pfam" id="PF20979">
    <property type="entry name" value="Arginosuc_syn_C"/>
    <property type="match status" value="1"/>
</dbReference>
<dbReference type="Pfam" id="PF00764">
    <property type="entry name" value="Arginosuc_synth"/>
    <property type="match status" value="1"/>
</dbReference>
<dbReference type="SUPFAM" id="SSF52402">
    <property type="entry name" value="Adenine nucleotide alpha hydrolases-like"/>
    <property type="match status" value="1"/>
</dbReference>
<dbReference type="SUPFAM" id="SSF69864">
    <property type="entry name" value="Argininosuccinate synthetase, C-terminal domain"/>
    <property type="match status" value="1"/>
</dbReference>
<dbReference type="PROSITE" id="PS00564">
    <property type="entry name" value="ARGININOSUCCIN_SYN_1"/>
    <property type="match status" value="1"/>
</dbReference>
<dbReference type="PROSITE" id="PS00565">
    <property type="entry name" value="ARGININOSUCCIN_SYN_2"/>
    <property type="match status" value="1"/>
</dbReference>